<accession>Q92GV7</accession>
<comment type="function">
    <text evidence="1">Essential cell division protein that forms a contractile ring structure (Z ring) at the future cell division site. The regulation of the ring assembly controls the timing and the location of cell division. One of the functions of the FtsZ ring is to recruit other cell division proteins to the septum to produce a new cell wall between the dividing cells. Binds GTP and shows GTPase activity.</text>
</comment>
<comment type="subunit">
    <text evidence="1">Homodimer. Polymerizes to form a dynamic ring structure in a strictly GTP-dependent manner. Interacts directly with several other division proteins.</text>
</comment>
<comment type="subcellular location">
    <subcellularLocation>
        <location evidence="1">Cytoplasm</location>
    </subcellularLocation>
    <text evidence="1">Assembles at midcell at the inner surface of the cytoplasmic membrane.</text>
</comment>
<comment type="similarity">
    <text evidence="1">Belongs to the FtsZ family.</text>
</comment>
<organism>
    <name type="scientific">Rickettsia conorii (strain ATCC VR-613 / Malish 7)</name>
    <dbReference type="NCBI Taxonomy" id="272944"/>
    <lineage>
        <taxon>Bacteria</taxon>
        <taxon>Pseudomonadati</taxon>
        <taxon>Pseudomonadota</taxon>
        <taxon>Alphaproteobacteria</taxon>
        <taxon>Rickettsiales</taxon>
        <taxon>Rickettsiaceae</taxon>
        <taxon>Rickettsieae</taxon>
        <taxon>Rickettsia</taxon>
        <taxon>spotted fever group</taxon>
    </lineage>
</organism>
<proteinExistence type="inferred from homology"/>
<dbReference type="EMBL" id="AE006914">
    <property type="protein sequence ID" value="AAL03553.1"/>
    <property type="molecule type" value="Genomic_DNA"/>
</dbReference>
<dbReference type="PIR" id="G97826">
    <property type="entry name" value="G97826"/>
</dbReference>
<dbReference type="RefSeq" id="WP_010977596.1">
    <property type="nucleotide sequence ID" value="NC_003103.1"/>
</dbReference>
<dbReference type="SMR" id="Q92GV7"/>
<dbReference type="GeneID" id="928159"/>
<dbReference type="KEGG" id="rco:RC1015"/>
<dbReference type="HOGENOM" id="CLU_024865_0_4_5"/>
<dbReference type="Proteomes" id="UP000000816">
    <property type="component" value="Chromosome"/>
</dbReference>
<dbReference type="GO" id="GO:0032153">
    <property type="term" value="C:cell division site"/>
    <property type="evidence" value="ECO:0007669"/>
    <property type="project" value="UniProtKB-UniRule"/>
</dbReference>
<dbReference type="GO" id="GO:0005737">
    <property type="term" value="C:cytoplasm"/>
    <property type="evidence" value="ECO:0007669"/>
    <property type="project" value="UniProtKB-SubCell"/>
</dbReference>
<dbReference type="GO" id="GO:0005525">
    <property type="term" value="F:GTP binding"/>
    <property type="evidence" value="ECO:0007669"/>
    <property type="project" value="UniProtKB-UniRule"/>
</dbReference>
<dbReference type="GO" id="GO:0003924">
    <property type="term" value="F:GTPase activity"/>
    <property type="evidence" value="ECO:0007669"/>
    <property type="project" value="UniProtKB-UniRule"/>
</dbReference>
<dbReference type="GO" id="GO:0000917">
    <property type="term" value="P:division septum assembly"/>
    <property type="evidence" value="ECO:0007669"/>
    <property type="project" value="UniProtKB-KW"/>
</dbReference>
<dbReference type="GO" id="GO:0043093">
    <property type="term" value="P:FtsZ-dependent cytokinesis"/>
    <property type="evidence" value="ECO:0007669"/>
    <property type="project" value="UniProtKB-UniRule"/>
</dbReference>
<dbReference type="GO" id="GO:0051258">
    <property type="term" value="P:protein polymerization"/>
    <property type="evidence" value="ECO:0007669"/>
    <property type="project" value="UniProtKB-UniRule"/>
</dbReference>
<dbReference type="CDD" id="cd02201">
    <property type="entry name" value="FtsZ_type1"/>
    <property type="match status" value="1"/>
</dbReference>
<dbReference type="FunFam" id="3.30.1330.20:FF:000011">
    <property type="entry name" value="Cell division protein FtsZ"/>
    <property type="match status" value="1"/>
</dbReference>
<dbReference type="FunFam" id="3.40.50.1440:FF:000001">
    <property type="entry name" value="Cell division protein FtsZ"/>
    <property type="match status" value="1"/>
</dbReference>
<dbReference type="Gene3D" id="3.30.1330.20">
    <property type="entry name" value="Tubulin/FtsZ, C-terminal domain"/>
    <property type="match status" value="1"/>
</dbReference>
<dbReference type="Gene3D" id="3.40.50.1440">
    <property type="entry name" value="Tubulin/FtsZ, GTPase domain"/>
    <property type="match status" value="1"/>
</dbReference>
<dbReference type="HAMAP" id="MF_00909">
    <property type="entry name" value="FtsZ"/>
    <property type="match status" value="1"/>
</dbReference>
<dbReference type="InterPro" id="IPR000158">
    <property type="entry name" value="Cell_div_FtsZ"/>
</dbReference>
<dbReference type="InterPro" id="IPR020805">
    <property type="entry name" value="Cell_div_FtsZ_CS"/>
</dbReference>
<dbReference type="InterPro" id="IPR045061">
    <property type="entry name" value="FtsZ/CetZ"/>
</dbReference>
<dbReference type="InterPro" id="IPR024757">
    <property type="entry name" value="FtsZ_C"/>
</dbReference>
<dbReference type="InterPro" id="IPR008280">
    <property type="entry name" value="Tub_FtsZ_C"/>
</dbReference>
<dbReference type="InterPro" id="IPR037103">
    <property type="entry name" value="Tubulin/FtsZ-like_C"/>
</dbReference>
<dbReference type="InterPro" id="IPR018316">
    <property type="entry name" value="Tubulin/FtsZ_2-layer-sand-dom"/>
</dbReference>
<dbReference type="InterPro" id="IPR036525">
    <property type="entry name" value="Tubulin/FtsZ_GTPase_sf"/>
</dbReference>
<dbReference type="InterPro" id="IPR003008">
    <property type="entry name" value="Tubulin_FtsZ_GTPase"/>
</dbReference>
<dbReference type="NCBIfam" id="TIGR00065">
    <property type="entry name" value="ftsZ"/>
    <property type="match status" value="1"/>
</dbReference>
<dbReference type="PANTHER" id="PTHR30314">
    <property type="entry name" value="CELL DIVISION PROTEIN FTSZ-RELATED"/>
    <property type="match status" value="1"/>
</dbReference>
<dbReference type="PANTHER" id="PTHR30314:SF3">
    <property type="entry name" value="MITOCHONDRIAL DIVISION PROTEIN FSZA"/>
    <property type="match status" value="1"/>
</dbReference>
<dbReference type="Pfam" id="PF12327">
    <property type="entry name" value="FtsZ_C"/>
    <property type="match status" value="1"/>
</dbReference>
<dbReference type="Pfam" id="PF00091">
    <property type="entry name" value="Tubulin"/>
    <property type="match status" value="1"/>
</dbReference>
<dbReference type="PRINTS" id="PR00423">
    <property type="entry name" value="CELLDVISFTSZ"/>
</dbReference>
<dbReference type="SMART" id="SM00864">
    <property type="entry name" value="Tubulin"/>
    <property type="match status" value="1"/>
</dbReference>
<dbReference type="SMART" id="SM00865">
    <property type="entry name" value="Tubulin_C"/>
    <property type="match status" value="1"/>
</dbReference>
<dbReference type="SUPFAM" id="SSF55307">
    <property type="entry name" value="Tubulin C-terminal domain-like"/>
    <property type="match status" value="1"/>
</dbReference>
<dbReference type="SUPFAM" id="SSF52490">
    <property type="entry name" value="Tubulin nucleotide-binding domain-like"/>
    <property type="match status" value="1"/>
</dbReference>
<dbReference type="PROSITE" id="PS01134">
    <property type="entry name" value="FTSZ_1"/>
    <property type="match status" value="1"/>
</dbReference>
<dbReference type="PROSITE" id="PS01135">
    <property type="entry name" value="FTSZ_2"/>
    <property type="match status" value="1"/>
</dbReference>
<evidence type="ECO:0000255" key="1">
    <source>
        <dbReference type="HAMAP-Rule" id="MF_00909"/>
    </source>
</evidence>
<evidence type="ECO:0000256" key="2">
    <source>
        <dbReference type="SAM" id="MobiDB-lite"/>
    </source>
</evidence>
<gene>
    <name evidence="1" type="primary">ftsZ</name>
    <name type="ordered locus">RC1015</name>
</gene>
<name>FTSZ_RICCN</name>
<protein>
    <recommendedName>
        <fullName evidence="1">Cell division protein FtsZ</fullName>
    </recommendedName>
</protein>
<feature type="chain" id="PRO_0000114375" description="Cell division protein FtsZ">
    <location>
        <begin position="1"/>
        <end position="452"/>
    </location>
</feature>
<feature type="region of interest" description="Disordered" evidence="2">
    <location>
        <begin position="432"/>
        <end position="452"/>
    </location>
</feature>
<feature type="compositionally biased region" description="Basic and acidic residues" evidence="2">
    <location>
        <begin position="433"/>
        <end position="442"/>
    </location>
</feature>
<feature type="binding site" evidence="1">
    <location>
        <begin position="24"/>
        <end position="28"/>
    </location>
    <ligand>
        <name>GTP</name>
        <dbReference type="ChEBI" id="CHEBI:37565"/>
    </ligand>
</feature>
<feature type="binding site" evidence="1">
    <location>
        <begin position="111"/>
        <end position="113"/>
    </location>
    <ligand>
        <name>GTP</name>
        <dbReference type="ChEBI" id="CHEBI:37565"/>
    </ligand>
</feature>
<feature type="binding site" evidence="1">
    <location>
        <position position="142"/>
    </location>
    <ligand>
        <name>GTP</name>
        <dbReference type="ChEBI" id="CHEBI:37565"/>
    </ligand>
</feature>
<feature type="binding site" evidence="1">
    <location>
        <position position="146"/>
    </location>
    <ligand>
        <name>GTP</name>
        <dbReference type="ChEBI" id="CHEBI:37565"/>
    </ligand>
</feature>
<feature type="binding site" evidence="1">
    <location>
        <position position="190"/>
    </location>
    <ligand>
        <name>GTP</name>
        <dbReference type="ChEBI" id="CHEBI:37565"/>
    </ligand>
</feature>
<reference key="1">
    <citation type="journal article" date="2001" name="Science">
        <title>Mechanisms of evolution in Rickettsia conorii and R. prowazekii.</title>
        <authorList>
            <person name="Ogata H."/>
            <person name="Audic S."/>
            <person name="Renesto-Audiffren P."/>
            <person name="Fournier P.-E."/>
            <person name="Barbe V."/>
            <person name="Samson D."/>
            <person name="Roux V."/>
            <person name="Cossart P."/>
            <person name="Weissenbach J."/>
            <person name="Claverie J.-M."/>
            <person name="Raoult D."/>
        </authorList>
    </citation>
    <scope>NUCLEOTIDE SEQUENCE [LARGE SCALE GENOMIC DNA]</scope>
    <source>
        <strain>ATCC VR-613 / Malish 7</strain>
    </source>
</reference>
<sequence>MVLNIKAPENIVLKPTITVFGVGGAGSNAVNNMISANLQGANFVVANTDAQSLEHSLCTNKIQLGVSTTRGLGAGASPEVGALAAQESESEIRNYLENSNMVFITAGMGGGTGTGSAPVIARIAKELGILTVGVVTKPFHFEGGHRMKTADKGLIELQQFVDTLIVIPNQNLFRIANEQTTFADAFKMADDVLHAGVRGVTDLMIMPGLINLDFADIKAVMSEMGKAMMGTGEASGEDRAIKAAESAISNPLLDHSSMCGARGVLINITGGSDMTLFEVDNAANRIREEVDNLDANIIFGSTFNPELKGMIRVSVVATGIDADKVPTYKPAIAETTNIVPEETYNKAIAQPTQIEEMPDFNSYSTENIEITDSPINQNFIGNEKELGLHANTFNKSEDDSPKPSFLGKIWGSLRASNNQTLERKNVVVSTLDQDNKESDIHDIPAFLRKKRD</sequence>
<keyword id="KW-0131">Cell cycle</keyword>
<keyword id="KW-0132">Cell division</keyword>
<keyword id="KW-0963">Cytoplasm</keyword>
<keyword id="KW-0342">GTP-binding</keyword>
<keyword id="KW-0547">Nucleotide-binding</keyword>
<keyword id="KW-0717">Septation</keyword>